<feature type="chain" id="PRO_1000204150" description="Lipoyl synthase">
    <location>
        <begin position="1"/>
        <end position="306"/>
    </location>
</feature>
<feature type="domain" description="Radical SAM core" evidence="2">
    <location>
        <begin position="64"/>
        <end position="278"/>
    </location>
</feature>
<feature type="binding site" evidence="1">
    <location>
        <position position="52"/>
    </location>
    <ligand>
        <name>[4Fe-4S] cluster</name>
        <dbReference type="ChEBI" id="CHEBI:49883"/>
        <label>1</label>
    </ligand>
</feature>
<feature type="binding site" evidence="1">
    <location>
        <position position="57"/>
    </location>
    <ligand>
        <name>[4Fe-4S] cluster</name>
        <dbReference type="ChEBI" id="CHEBI:49883"/>
        <label>1</label>
    </ligand>
</feature>
<feature type="binding site" evidence="1">
    <location>
        <position position="63"/>
    </location>
    <ligand>
        <name>[4Fe-4S] cluster</name>
        <dbReference type="ChEBI" id="CHEBI:49883"/>
        <label>1</label>
    </ligand>
</feature>
<feature type="binding site" evidence="1">
    <location>
        <position position="78"/>
    </location>
    <ligand>
        <name>[4Fe-4S] cluster</name>
        <dbReference type="ChEBI" id="CHEBI:49883"/>
        <label>2</label>
        <note>4Fe-4S-S-AdoMet</note>
    </ligand>
</feature>
<feature type="binding site" evidence="1">
    <location>
        <position position="82"/>
    </location>
    <ligand>
        <name>[4Fe-4S] cluster</name>
        <dbReference type="ChEBI" id="CHEBI:49883"/>
        <label>2</label>
        <note>4Fe-4S-S-AdoMet</note>
    </ligand>
</feature>
<feature type="binding site" evidence="1">
    <location>
        <position position="85"/>
    </location>
    <ligand>
        <name>[4Fe-4S] cluster</name>
        <dbReference type="ChEBI" id="CHEBI:49883"/>
        <label>2</label>
        <note>4Fe-4S-S-AdoMet</note>
    </ligand>
</feature>
<feature type="binding site" evidence="1">
    <location>
        <position position="289"/>
    </location>
    <ligand>
        <name>[4Fe-4S] cluster</name>
        <dbReference type="ChEBI" id="CHEBI:49883"/>
        <label>1</label>
    </ligand>
</feature>
<protein>
    <recommendedName>
        <fullName evidence="1">Lipoyl synthase</fullName>
        <ecNumber evidence="1">2.8.1.8</ecNumber>
    </recommendedName>
    <alternativeName>
        <fullName evidence="1">Lip-syn</fullName>
        <shortName evidence="1">LS</shortName>
    </alternativeName>
    <alternativeName>
        <fullName evidence="1">Lipoate synthase</fullName>
    </alternativeName>
    <alternativeName>
        <fullName evidence="1">Lipoic acid synthase</fullName>
    </alternativeName>
    <alternativeName>
        <fullName evidence="1">Sulfur insertion protein LipA</fullName>
    </alternativeName>
</protein>
<accession>B0SGV6</accession>
<gene>
    <name evidence="1" type="primary">lipA</name>
    <name type="ordered locus">LBF_1409</name>
</gene>
<keyword id="KW-0004">4Fe-4S</keyword>
<keyword id="KW-0963">Cytoplasm</keyword>
<keyword id="KW-0408">Iron</keyword>
<keyword id="KW-0411">Iron-sulfur</keyword>
<keyword id="KW-0479">Metal-binding</keyword>
<keyword id="KW-0949">S-adenosyl-L-methionine</keyword>
<keyword id="KW-0808">Transferase</keyword>
<evidence type="ECO:0000255" key="1">
    <source>
        <dbReference type="HAMAP-Rule" id="MF_00206"/>
    </source>
</evidence>
<evidence type="ECO:0000255" key="2">
    <source>
        <dbReference type="PROSITE-ProRule" id="PRU01266"/>
    </source>
</evidence>
<proteinExistence type="inferred from homology"/>
<reference key="1">
    <citation type="journal article" date="2008" name="PLoS ONE">
        <title>Genome sequence of the saprophyte Leptospira biflexa provides insights into the evolution of Leptospira and the pathogenesis of leptospirosis.</title>
        <authorList>
            <person name="Picardeau M."/>
            <person name="Bulach D.M."/>
            <person name="Bouchier C."/>
            <person name="Zuerner R.L."/>
            <person name="Zidane N."/>
            <person name="Wilson P.J."/>
            <person name="Creno S."/>
            <person name="Kuczek E.S."/>
            <person name="Bommezzadri S."/>
            <person name="Davis J.C."/>
            <person name="McGrath A."/>
            <person name="Johnson M.J."/>
            <person name="Boursaux-Eude C."/>
            <person name="Seemann T."/>
            <person name="Rouy Z."/>
            <person name="Coppel R.L."/>
            <person name="Rood J.I."/>
            <person name="Lajus A."/>
            <person name="Davies J.K."/>
            <person name="Medigue C."/>
            <person name="Adler B."/>
        </authorList>
    </citation>
    <scope>NUCLEOTIDE SEQUENCE [LARGE SCALE GENOMIC DNA]</scope>
    <source>
        <strain>Patoc 1 / Ames</strain>
    </source>
</reference>
<dbReference type="EC" id="2.8.1.8" evidence="1"/>
<dbReference type="EMBL" id="CP000777">
    <property type="protein sequence ID" value="ABZ93923.1"/>
    <property type="molecule type" value="Genomic_DNA"/>
</dbReference>
<dbReference type="RefSeq" id="WP_012388448.1">
    <property type="nucleotide sequence ID" value="NC_010842.1"/>
</dbReference>
<dbReference type="SMR" id="B0SGV6"/>
<dbReference type="KEGG" id="lbf:LBF_1409"/>
<dbReference type="HOGENOM" id="CLU_033144_2_1_12"/>
<dbReference type="UniPathway" id="UPA00538">
    <property type="reaction ID" value="UER00593"/>
</dbReference>
<dbReference type="GO" id="GO:0005737">
    <property type="term" value="C:cytoplasm"/>
    <property type="evidence" value="ECO:0007669"/>
    <property type="project" value="UniProtKB-SubCell"/>
</dbReference>
<dbReference type="GO" id="GO:0051539">
    <property type="term" value="F:4 iron, 4 sulfur cluster binding"/>
    <property type="evidence" value="ECO:0007669"/>
    <property type="project" value="UniProtKB-UniRule"/>
</dbReference>
<dbReference type="GO" id="GO:0016992">
    <property type="term" value="F:lipoate synthase activity"/>
    <property type="evidence" value="ECO:0007669"/>
    <property type="project" value="UniProtKB-UniRule"/>
</dbReference>
<dbReference type="GO" id="GO:0046872">
    <property type="term" value="F:metal ion binding"/>
    <property type="evidence" value="ECO:0007669"/>
    <property type="project" value="UniProtKB-KW"/>
</dbReference>
<dbReference type="CDD" id="cd01335">
    <property type="entry name" value="Radical_SAM"/>
    <property type="match status" value="1"/>
</dbReference>
<dbReference type="Gene3D" id="3.20.20.70">
    <property type="entry name" value="Aldolase class I"/>
    <property type="match status" value="1"/>
</dbReference>
<dbReference type="HAMAP" id="MF_00206">
    <property type="entry name" value="Lipoyl_synth"/>
    <property type="match status" value="1"/>
</dbReference>
<dbReference type="InterPro" id="IPR013785">
    <property type="entry name" value="Aldolase_TIM"/>
</dbReference>
<dbReference type="InterPro" id="IPR006638">
    <property type="entry name" value="Elp3/MiaA/NifB-like_rSAM"/>
</dbReference>
<dbReference type="InterPro" id="IPR003698">
    <property type="entry name" value="Lipoyl_synth"/>
</dbReference>
<dbReference type="InterPro" id="IPR007197">
    <property type="entry name" value="rSAM"/>
</dbReference>
<dbReference type="NCBIfam" id="TIGR00510">
    <property type="entry name" value="lipA"/>
    <property type="match status" value="1"/>
</dbReference>
<dbReference type="NCBIfam" id="NF004019">
    <property type="entry name" value="PRK05481.1"/>
    <property type="match status" value="1"/>
</dbReference>
<dbReference type="NCBIfam" id="NF009544">
    <property type="entry name" value="PRK12928.1"/>
    <property type="match status" value="1"/>
</dbReference>
<dbReference type="PANTHER" id="PTHR10949">
    <property type="entry name" value="LIPOYL SYNTHASE"/>
    <property type="match status" value="1"/>
</dbReference>
<dbReference type="PANTHER" id="PTHR10949:SF0">
    <property type="entry name" value="LIPOYL SYNTHASE, MITOCHONDRIAL"/>
    <property type="match status" value="1"/>
</dbReference>
<dbReference type="Pfam" id="PF04055">
    <property type="entry name" value="Radical_SAM"/>
    <property type="match status" value="1"/>
</dbReference>
<dbReference type="PIRSF" id="PIRSF005963">
    <property type="entry name" value="Lipoyl_synth"/>
    <property type="match status" value="1"/>
</dbReference>
<dbReference type="SFLD" id="SFLDF00271">
    <property type="entry name" value="lipoyl_synthase"/>
    <property type="match status" value="1"/>
</dbReference>
<dbReference type="SFLD" id="SFLDG01058">
    <property type="entry name" value="lipoyl_synthase_like"/>
    <property type="match status" value="1"/>
</dbReference>
<dbReference type="SMART" id="SM00729">
    <property type="entry name" value="Elp3"/>
    <property type="match status" value="1"/>
</dbReference>
<dbReference type="SUPFAM" id="SSF102114">
    <property type="entry name" value="Radical SAM enzymes"/>
    <property type="match status" value="1"/>
</dbReference>
<dbReference type="PROSITE" id="PS51918">
    <property type="entry name" value="RADICAL_SAM"/>
    <property type="match status" value="1"/>
</dbReference>
<name>LIPA_LEPBA</name>
<organism>
    <name type="scientific">Leptospira biflexa serovar Patoc (strain Patoc 1 / Ames)</name>
    <dbReference type="NCBI Taxonomy" id="355278"/>
    <lineage>
        <taxon>Bacteria</taxon>
        <taxon>Pseudomonadati</taxon>
        <taxon>Spirochaetota</taxon>
        <taxon>Spirochaetia</taxon>
        <taxon>Leptospirales</taxon>
        <taxon>Leptospiraceae</taxon>
        <taxon>Leptospira</taxon>
    </lineage>
</organism>
<comment type="function">
    <text evidence="1">Catalyzes the radical-mediated insertion of two sulfur atoms into the C-6 and C-8 positions of the octanoyl moiety bound to the lipoyl domains of lipoate-dependent enzymes, thereby converting the octanoylated domains into lipoylated derivatives.</text>
</comment>
<comment type="catalytic activity">
    <reaction evidence="1">
        <text>[[Fe-S] cluster scaffold protein carrying a second [4Fe-4S](2+) cluster] + N(6)-octanoyl-L-lysyl-[protein] + 2 oxidized [2Fe-2S]-[ferredoxin] + 2 S-adenosyl-L-methionine + 4 H(+) = [[Fe-S] cluster scaffold protein] + N(6)-[(R)-dihydrolipoyl]-L-lysyl-[protein] + 4 Fe(3+) + 2 hydrogen sulfide + 2 5'-deoxyadenosine + 2 L-methionine + 2 reduced [2Fe-2S]-[ferredoxin]</text>
        <dbReference type="Rhea" id="RHEA:16585"/>
        <dbReference type="Rhea" id="RHEA-COMP:9928"/>
        <dbReference type="Rhea" id="RHEA-COMP:10000"/>
        <dbReference type="Rhea" id="RHEA-COMP:10001"/>
        <dbReference type="Rhea" id="RHEA-COMP:10475"/>
        <dbReference type="Rhea" id="RHEA-COMP:14568"/>
        <dbReference type="Rhea" id="RHEA-COMP:14569"/>
        <dbReference type="ChEBI" id="CHEBI:15378"/>
        <dbReference type="ChEBI" id="CHEBI:17319"/>
        <dbReference type="ChEBI" id="CHEBI:29034"/>
        <dbReference type="ChEBI" id="CHEBI:29919"/>
        <dbReference type="ChEBI" id="CHEBI:33722"/>
        <dbReference type="ChEBI" id="CHEBI:33737"/>
        <dbReference type="ChEBI" id="CHEBI:33738"/>
        <dbReference type="ChEBI" id="CHEBI:57844"/>
        <dbReference type="ChEBI" id="CHEBI:59789"/>
        <dbReference type="ChEBI" id="CHEBI:78809"/>
        <dbReference type="ChEBI" id="CHEBI:83100"/>
        <dbReference type="EC" id="2.8.1.8"/>
    </reaction>
</comment>
<comment type="cofactor">
    <cofactor evidence="1">
        <name>[4Fe-4S] cluster</name>
        <dbReference type="ChEBI" id="CHEBI:49883"/>
    </cofactor>
    <text evidence="1">Binds 2 [4Fe-4S] clusters per subunit. One cluster is coordinated with 3 cysteines and an exchangeable S-adenosyl-L-methionine.</text>
</comment>
<comment type="pathway">
    <text evidence="1">Protein modification; protein lipoylation via endogenous pathway; protein N(6)-(lipoyl)lysine from octanoyl-[acyl-carrier-protein]: step 2/2.</text>
</comment>
<comment type="subcellular location">
    <subcellularLocation>
        <location evidence="1">Cytoplasm</location>
    </subcellularLocation>
</comment>
<comment type="similarity">
    <text evidence="1">Belongs to the radical SAM superfamily. Lipoyl synthase family.</text>
</comment>
<sequence>MNPLKKKPRSKNLNPTVPLPDWMKVRVSFPTDSDALSVVRAEVESKELHTVCESASCPNLNHCWNRKTATYMLAGDICTRRCQYCDVAFGKPKPLDSLEPERVARSVQSLGLRHVVLTAVNRDDLKDGGASHFAETITKIKTYHKDCTIEVLIPDFKAKEDSLQILYAAKPNIINHNIETVESLFPTITPQKNYKRSLEVLAHIANHGFLTKSGIILGLGETDEDVNQCLMDLFAHGVRMLTIGQYLQPGPTHYPVQSFVRPETFVMWKETAYKIGFKTVASGPLVRSSYHADEYFHEESQILPTE</sequence>